<accession>Q9UL49</accession>
<accession>O94771</accession>
<accession>Q9BYW0</accession>
<comment type="function">
    <text evidence="3">Putative transcription factor. Isoform 3 may play a role in early spermatogenesis.</text>
</comment>
<comment type="subunit">
    <text>Efficient DNA binding requires dimerization with another bHLH protein.</text>
</comment>
<comment type="subcellular location">
    <subcellularLocation>
        <location evidence="1 3">Nucleus</location>
    </subcellularLocation>
</comment>
<comment type="alternative products">
    <event type="alternative splicing"/>
    <isoform>
        <id>Q9UL49-3</id>
        <name>3</name>
        <sequence type="displayed"/>
    </isoform>
    <isoform>
        <id>Q9UL49-1</id>
        <name>1</name>
        <sequence type="described" ref="VSP_030310"/>
    </isoform>
    <isoform>
        <id>Q9UL49-2</id>
        <name>2</name>
        <sequence type="described" ref="VSP_002160"/>
    </isoform>
</comment>
<comment type="tissue specificity">
    <text evidence="3">Isoform 3 is testis specific. Isoform 2 is pancreas specific.</text>
</comment>
<comment type="developmental stage">
    <text evidence="3">Isoform 3 is specifically expressed in primary spermatocytes at the pachytene stage, but not those at leptonema stage. Not expressed in other testicular cells, including spermatogonia located in the basal compartment of the seminiferous tubule or spermatids.</text>
</comment>
<comment type="miscellaneous">
    <text>Antibodies against TCFL5 are present in sera from patients with Chagas disease (also called American Trypanosomiasis), a disease caused by Trypanosoma cruzi. Two different epitopes that mimic Trypanosoma cruzi antigens have been identified: R1 and R3 epitopes, which are recognized by T- and B-cells, respectively.</text>
</comment>
<comment type="sequence caution" evidence="5">
    <conflict type="erroneous initiation">
        <sequence resource="EMBL-CDS" id="BAA36557"/>
    </conflict>
</comment>
<evidence type="ECO:0000255" key="1">
    <source>
        <dbReference type="PROSITE-ProRule" id="PRU00981"/>
    </source>
</evidence>
<evidence type="ECO:0000256" key="2">
    <source>
        <dbReference type="SAM" id="MobiDB-lite"/>
    </source>
</evidence>
<evidence type="ECO:0000269" key="3">
    <source>
    </source>
</evidence>
<evidence type="ECO:0000303" key="4">
    <source>
    </source>
</evidence>
<evidence type="ECO:0000305" key="5"/>
<keyword id="KW-0025">Alternative splicing</keyword>
<keyword id="KW-0217">Developmental protein</keyword>
<keyword id="KW-0221">Differentiation</keyword>
<keyword id="KW-0238">DNA-binding</keyword>
<keyword id="KW-0539">Nucleus</keyword>
<keyword id="KW-1267">Proteomics identification</keyword>
<keyword id="KW-1185">Reference proteome</keyword>
<keyword id="KW-0744">Spermatogenesis</keyword>
<keyword id="KW-0804">Transcription</keyword>
<keyword id="KW-0805">Transcription regulation</keyword>
<proteinExistence type="evidence at protein level"/>
<sequence length="500" mass="52697">MSGPGPREPPPEAGAAGGEAAVEGAGGGDAALGEPGLSFTTTDLSLVEMTEVEYTQLQHILCSHMEAAADGELETRLNSALLAAAGPGAGAGGFAAGGQGGAAPVYPVLCPSALAADAPCLGHIDFQELRMMLLSEAGAAEKTSGGGDGARARADGAAKEGAGAAAAAAGPDGAPEARAKPAVRVRLEDRFNSIPAEPPPAPRGPEPPEPGGALNNLVTLIRHPSELMNVPLQQQNKCTALVKNKTAATTTALQFTYPLFTTNACSTSGNSNLSQTQSSSNSCSVLEAAKHQDIGLPRAFSFCYQQEIESTKQTLGSRNKVLPEQVWIKVGEAALCKQALKRNRSRMRQLDTNVERRALGEIQNVGEGATATQGAWQSSESSQANLGEQAQSGPQGGRSQRRERHNRMERDRRRRIRICCDELNLLVPFCNAETDKATTLQWTTAFLKYIQERHGDSLKKEFESVFCGKTGRRLKLTRPDSLVTCPAQGSLQSSPSMEIK</sequence>
<organism>
    <name type="scientific">Homo sapiens</name>
    <name type="common">Human</name>
    <dbReference type="NCBI Taxonomy" id="9606"/>
    <lineage>
        <taxon>Eukaryota</taxon>
        <taxon>Metazoa</taxon>
        <taxon>Chordata</taxon>
        <taxon>Craniata</taxon>
        <taxon>Vertebrata</taxon>
        <taxon>Euteleostomi</taxon>
        <taxon>Mammalia</taxon>
        <taxon>Eutheria</taxon>
        <taxon>Euarchontoglires</taxon>
        <taxon>Primates</taxon>
        <taxon>Haplorrhini</taxon>
        <taxon>Catarrhini</taxon>
        <taxon>Hominidae</taxon>
        <taxon>Homo</taxon>
    </lineage>
</organism>
<feature type="chain" id="PRO_0000127475" description="Transcription factor-like 5 protein">
    <location>
        <begin position="1"/>
        <end position="500"/>
    </location>
</feature>
<feature type="domain" description="bHLH" evidence="1">
    <location>
        <begin position="400"/>
        <end position="450"/>
    </location>
</feature>
<feature type="region of interest" description="Disordered" evidence="2">
    <location>
        <begin position="1"/>
        <end position="34"/>
    </location>
</feature>
<feature type="region of interest" description="Disordered" evidence="2">
    <location>
        <begin position="191"/>
        <end position="211"/>
    </location>
</feature>
<feature type="region of interest" description="R3 epitope (recognized by Chagas's antibodies)">
    <location>
        <begin position="347"/>
        <end position="356"/>
    </location>
</feature>
<feature type="region of interest" description="Disordered" evidence="2">
    <location>
        <begin position="365"/>
        <end position="410"/>
    </location>
</feature>
<feature type="region of interest" description="R1 epitope (recognized by Chagas's antibodies)">
    <location>
        <begin position="481"/>
        <end position="500"/>
    </location>
</feature>
<feature type="compositionally biased region" description="Pro residues" evidence="2">
    <location>
        <begin position="1"/>
        <end position="12"/>
    </location>
</feature>
<feature type="compositionally biased region" description="Pro residues" evidence="2">
    <location>
        <begin position="196"/>
        <end position="210"/>
    </location>
</feature>
<feature type="compositionally biased region" description="Polar residues" evidence="2">
    <location>
        <begin position="370"/>
        <end position="393"/>
    </location>
</feature>
<feature type="splice variant" id="VSP_002160" description="In isoform 2." evidence="4">
    <location>
        <begin position="1"/>
        <end position="227"/>
    </location>
</feature>
<feature type="splice variant" id="VSP_030310" description="In isoform 1." evidence="5">
    <location>
        <begin position="1"/>
        <end position="48"/>
    </location>
</feature>
<feature type="sequence variant" id="VAR_061263" description="In dbSNP:rs17854409.">
    <original>N</original>
    <variation>D</variation>
    <location>
        <position position="272"/>
    </location>
</feature>
<feature type="sequence variant" id="VAR_049555" description="In dbSNP:rs34304654.">
    <original>E</original>
    <variation>D</variation>
    <location>
        <position position="380"/>
    </location>
</feature>
<feature type="sequence conflict" description="In Ref. 4; BAA36557." evidence="5" ref="4">
    <original>T</original>
    <variation>M</variation>
    <location>
        <position position="75"/>
    </location>
</feature>
<gene>
    <name type="primary">TCFL5</name>
    <name type="synonym">CHA</name>
    <name type="synonym">E2BP1</name>
</gene>
<reference key="1">
    <citation type="journal article" date="2001" name="J. Clin. Invest.">
        <title>Dominant T- and B-cell epitopes in an autoantigen linked to Chagas' disease.</title>
        <authorList>
            <person name="Girones N."/>
            <person name="Rodriguez C.I."/>
            <person name="Carrasco-Marin E."/>
            <person name="Hernaez R.F."/>
            <person name="de Rego J.L."/>
            <person name="Fresno M."/>
        </authorList>
    </citation>
    <scope>NUCLEOTIDE SEQUENCE [MRNA] (ISOFORM 2)</scope>
    <scope>INVOLVEMENT IN AUTOIMMUNE DISEASE</scope>
    <source>
        <tissue>T lymphoblast</tissue>
    </source>
</reference>
<reference key="2">
    <citation type="submission" date="1998-06" db="EMBL/GenBank/DDBJ databases">
        <authorList>
            <person name="Zheng P.-S."/>
            <person name="Pater A."/>
        </authorList>
    </citation>
    <scope>NUCLEOTIDE SEQUENCE (ISOFORM 1)</scope>
</reference>
<reference key="3">
    <citation type="journal article" date="2001" name="Nature">
        <title>The DNA sequence and comparative analysis of human chromosome 20.</title>
        <authorList>
            <person name="Deloukas P."/>
            <person name="Matthews L.H."/>
            <person name="Ashurst J.L."/>
            <person name="Burton J."/>
            <person name="Gilbert J.G.R."/>
            <person name="Jones M."/>
            <person name="Stavrides G."/>
            <person name="Almeida J.P."/>
            <person name="Babbage A.K."/>
            <person name="Bagguley C.L."/>
            <person name="Bailey J."/>
            <person name="Barlow K.F."/>
            <person name="Bates K.N."/>
            <person name="Beard L.M."/>
            <person name="Beare D.M."/>
            <person name="Beasley O.P."/>
            <person name="Bird C.P."/>
            <person name="Blakey S.E."/>
            <person name="Bridgeman A.M."/>
            <person name="Brown A.J."/>
            <person name="Buck D."/>
            <person name="Burrill W.D."/>
            <person name="Butler A.P."/>
            <person name="Carder C."/>
            <person name="Carter N.P."/>
            <person name="Chapman J.C."/>
            <person name="Clamp M."/>
            <person name="Clark G."/>
            <person name="Clark L.N."/>
            <person name="Clark S.Y."/>
            <person name="Clee C.M."/>
            <person name="Clegg S."/>
            <person name="Cobley V.E."/>
            <person name="Collier R.E."/>
            <person name="Connor R.E."/>
            <person name="Corby N.R."/>
            <person name="Coulson A."/>
            <person name="Coville G.J."/>
            <person name="Deadman R."/>
            <person name="Dhami P.D."/>
            <person name="Dunn M."/>
            <person name="Ellington A.G."/>
            <person name="Frankland J.A."/>
            <person name="Fraser A."/>
            <person name="French L."/>
            <person name="Garner P."/>
            <person name="Grafham D.V."/>
            <person name="Griffiths C."/>
            <person name="Griffiths M.N.D."/>
            <person name="Gwilliam R."/>
            <person name="Hall R.E."/>
            <person name="Hammond S."/>
            <person name="Harley J.L."/>
            <person name="Heath P.D."/>
            <person name="Ho S."/>
            <person name="Holden J.L."/>
            <person name="Howden P.J."/>
            <person name="Huckle E."/>
            <person name="Hunt A.R."/>
            <person name="Hunt S.E."/>
            <person name="Jekosch K."/>
            <person name="Johnson C.M."/>
            <person name="Johnson D."/>
            <person name="Kay M.P."/>
            <person name="Kimberley A.M."/>
            <person name="King A."/>
            <person name="Knights A."/>
            <person name="Laird G.K."/>
            <person name="Lawlor S."/>
            <person name="Lehvaeslaiho M.H."/>
            <person name="Leversha M.A."/>
            <person name="Lloyd C."/>
            <person name="Lloyd D.M."/>
            <person name="Lovell J.D."/>
            <person name="Marsh V.L."/>
            <person name="Martin S.L."/>
            <person name="McConnachie L.J."/>
            <person name="McLay K."/>
            <person name="McMurray A.A."/>
            <person name="Milne S.A."/>
            <person name="Mistry D."/>
            <person name="Moore M.J.F."/>
            <person name="Mullikin J.C."/>
            <person name="Nickerson T."/>
            <person name="Oliver K."/>
            <person name="Parker A."/>
            <person name="Patel R."/>
            <person name="Pearce T.A.V."/>
            <person name="Peck A.I."/>
            <person name="Phillimore B.J.C.T."/>
            <person name="Prathalingam S.R."/>
            <person name="Plumb R.W."/>
            <person name="Ramsay H."/>
            <person name="Rice C.M."/>
            <person name="Ross M.T."/>
            <person name="Scott C.E."/>
            <person name="Sehra H.K."/>
            <person name="Shownkeen R."/>
            <person name="Sims S."/>
            <person name="Skuce C.D."/>
            <person name="Smith M.L."/>
            <person name="Soderlund C."/>
            <person name="Steward C.A."/>
            <person name="Sulston J.E."/>
            <person name="Swann R.M."/>
            <person name="Sycamore N."/>
            <person name="Taylor R."/>
            <person name="Tee L."/>
            <person name="Thomas D.W."/>
            <person name="Thorpe A."/>
            <person name="Tracey A."/>
            <person name="Tromans A.C."/>
            <person name="Vaudin M."/>
            <person name="Wall M."/>
            <person name="Wallis J.M."/>
            <person name="Whitehead S.L."/>
            <person name="Whittaker P."/>
            <person name="Willey D.L."/>
            <person name="Williams L."/>
            <person name="Williams S.A."/>
            <person name="Wilming L."/>
            <person name="Wray P.W."/>
            <person name="Hubbard T."/>
            <person name="Durbin R.M."/>
            <person name="Bentley D.R."/>
            <person name="Beck S."/>
            <person name="Rogers J."/>
        </authorList>
    </citation>
    <scope>NUCLEOTIDE SEQUENCE [LARGE SCALE GENOMIC DNA]</scope>
</reference>
<reference key="4">
    <citation type="journal article" date="1998" name="Cytogenet. Cell Genet.">
        <title>Cloning of TCFL5 encoding a novel human basic helix-loop-helix motif protein that is specifically expressed in primary spermatocytes at the pachytene stage.</title>
        <authorList>
            <person name="Maruyama O."/>
            <person name="Nishimori H."/>
            <person name="Katagiri T."/>
            <person name="Miki Y."/>
            <person name="Ueno A."/>
            <person name="Nakamura Y."/>
        </authorList>
    </citation>
    <scope>NUCLEOTIDE SEQUENCE [MRNA] OF 17-500 (ISOFORM 3)</scope>
    <scope>FUNCTION</scope>
    <scope>SUBCELLULAR LOCATION</scope>
    <scope>TISSUE SPECIFICITY</scope>
    <scope>DEVELOPMENTAL STAGE</scope>
</reference>
<dbReference type="EMBL" id="AJ271337">
    <property type="protein sequence ID" value="CAC24700.1"/>
    <property type="molecule type" value="mRNA"/>
</dbReference>
<dbReference type="EMBL" id="AF070992">
    <property type="protein sequence ID" value="AAD53986.1"/>
    <property type="molecule type" value="mRNA"/>
</dbReference>
<dbReference type="EMBL" id="AL035669">
    <property type="status" value="NOT_ANNOTATED_CDS"/>
    <property type="molecule type" value="Genomic_DNA"/>
</dbReference>
<dbReference type="EMBL" id="AB012124">
    <property type="protein sequence ID" value="BAA36557.1"/>
    <property type="status" value="ALT_INIT"/>
    <property type="molecule type" value="mRNA"/>
</dbReference>
<dbReference type="CCDS" id="CCDS13506.1">
    <molecule id="Q9UL49-3"/>
</dbReference>
<dbReference type="RefSeq" id="NP_006593.2">
    <molecule id="Q9UL49-3"/>
    <property type="nucleotide sequence ID" value="NM_006602.3"/>
</dbReference>
<dbReference type="RefSeq" id="XP_047295796.1">
    <molecule id="Q9UL49-2"/>
    <property type="nucleotide sequence ID" value="XM_047439840.1"/>
</dbReference>
<dbReference type="RefSeq" id="XP_054178839.1">
    <molecule id="Q9UL49-2"/>
    <property type="nucleotide sequence ID" value="XM_054322864.1"/>
</dbReference>
<dbReference type="SMR" id="Q9UL49"/>
<dbReference type="BioGRID" id="115955">
    <property type="interactions" value="4"/>
</dbReference>
<dbReference type="FunCoup" id="Q9UL49">
    <property type="interactions" value="1447"/>
</dbReference>
<dbReference type="STRING" id="9606.ENSP00000334294"/>
<dbReference type="GlyGen" id="Q9UL49">
    <property type="glycosylation" value="1 site"/>
</dbReference>
<dbReference type="iPTMnet" id="Q9UL49"/>
<dbReference type="PhosphoSitePlus" id="Q9UL49"/>
<dbReference type="BioMuta" id="TCFL5"/>
<dbReference type="DMDM" id="166214983"/>
<dbReference type="jPOST" id="Q9UL49"/>
<dbReference type="MassIVE" id="Q9UL49"/>
<dbReference type="PaxDb" id="9606-ENSP00000334294"/>
<dbReference type="PeptideAtlas" id="Q9UL49"/>
<dbReference type="ProteomicsDB" id="84948">
    <molecule id="Q9UL49-3"/>
</dbReference>
<dbReference type="ProteomicsDB" id="84949">
    <molecule id="Q9UL49-1"/>
</dbReference>
<dbReference type="ProteomicsDB" id="84950">
    <molecule id="Q9UL49-2"/>
</dbReference>
<dbReference type="Antibodypedia" id="14989">
    <property type="antibodies" value="200 antibodies from 31 providers"/>
</dbReference>
<dbReference type="DNASU" id="10732"/>
<dbReference type="Ensembl" id="ENST00000335351.8">
    <molecule id="Q9UL49-3"/>
    <property type="protein sequence ID" value="ENSP00000334294.3"/>
    <property type="gene ID" value="ENSG00000101190.13"/>
</dbReference>
<dbReference type="GeneID" id="10732"/>
<dbReference type="KEGG" id="hsa:10732"/>
<dbReference type="MANE-Select" id="ENST00000335351.8">
    <property type="protein sequence ID" value="ENSP00000334294.3"/>
    <property type="RefSeq nucleotide sequence ID" value="NM_006602.4"/>
    <property type="RefSeq protein sequence ID" value="NP_006593.2"/>
</dbReference>
<dbReference type="UCSC" id="uc002ydp.3">
    <molecule id="Q9UL49-3"/>
    <property type="organism name" value="human"/>
</dbReference>
<dbReference type="AGR" id="HGNC:11646"/>
<dbReference type="CTD" id="10732"/>
<dbReference type="DisGeNET" id="10732"/>
<dbReference type="GeneCards" id="TCFL5"/>
<dbReference type="HGNC" id="HGNC:11646">
    <property type="gene designation" value="TCFL5"/>
</dbReference>
<dbReference type="HPA" id="ENSG00000101190">
    <property type="expression patterns" value="Tissue enhanced (brain, testis)"/>
</dbReference>
<dbReference type="MIM" id="604745">
    <property type="type" value="gene"/>
</dbReference>
<dbReference type="neXtProt" id="NX_Q9UL49"/>
<dbReference type="OpenTargets" id="ENSG00000101190"/>
<dbReference type="PharmGKB" id="PA36398"/>
<dbReference type="VEuPathDB" id="HostDB:ENSG00000101190"/>
<dbReference type="eggNOG" id="ENOG502QVQ5">
    <property type="taxonomic scope" value="Eukaryota"/>
</dbReference>
<dbReference type="GeneTree" id="ENSGT00390000002821"/>
<dbReference type="HOGENOM" id="CLU_543967_0_0_1"/>
<dbReference type="InParanoid" id="Q9UL49"/>
<dbReference type="OMA" id="DIQNVCE"/>
<dbReference type="OrthoDB" id="9946078at2759"/>
<dbReference type="PAN-GO" id="Q9UL49">
    <property type="GO annotations" value="4 GO annotations based on evolutionary models"/>
</dbReference>
<dbReference type="PhylomeDB" id="Q9UL49"/>
<dbReference type="TreeFam" id="TF336112"/>
<dbReference type="PathwayCommons" id="Q9UL49"/>
<dbReference type="SignaLink" id="Q9UL49"/>
<dbReference type="SIGNOR" id="Q9UL49"/>
<dbReference type="BioGRID-ORCS" id="10732">
    <property type="hits" value="37 hits in 1160 CRISPR screens"/>
</dbReference>
<dbReference type="ChiTaRS" id="TCFL5">
    <property type="organism name" value="human"/>
</dbReference>
<dbReference type="GenomeRNAi" id="10732"/>
<dbReference type="Pharos" id="Q9UL49">
    <property type="development level" value="Tbio"/>
</dbReference>
<dbReference type="PRO" id="PR:Q9UL49"/>
<dbReference type="Proteomes" id="UP000005640">
    <property type="component" value="Chromosome 20"/>
</dbReference>
<dbReference type="RNAct" id="Q9UL49">
    <property type="molecule type" value="protein"/>
</dbReference>
<dbReference type="Bgee" id="ENSG00000101190">
    <property type="expression patterns" value="Expressed in sperm and 183 other cell types or tissues"/>
</dbReference>
<dbReference type="ExpressionAtlas" id="Q9UL49">
    <property type="expression patterns" value="baseline and differential"/>
</dbReference>
<dbReference type="GO" id="GO:0000785">
    <property type="term" value="C:chromatin"/>
    <property type="evidence" value="ECO:0000247"/>
    <property type="project" value="NTNU_SB"/>
</dbReference>
<dbReference type="GO" id="GO:0001673">
    <property type="term" value="C:male germ cell nucleus"/>
    <property type="evidence" value="ECO:0007669"/>
    <property type="project" value="Ensembl"/>
</dbReference>
<dbReference type="GO" id="GO:0005634">
    <property type="term" value="C:nucleus"/>
    <property type="evidence" value="ECO:0000314"/>
    <property type="project" value="UniProtKB"/>
</dbReference>
<dbReference type="GO" id="GO:0003677">
    <property type="term" value="F:DNA binding"/>
    <property type="evidence" value="ECO:0000314"/>
    <property type="project" value="UniProtKB"/>
</dbReference>
<dbReference type="GO" id="GO:0003700">
    <property type="term" value="F:DNA-binding transcription factor activity"/>
    <property type="evidence" value="ECO:0000304"/>
    <property type="project" value="ProtInc"/>
</dbReference>
<dbReference type="GO" id="GO:0000981">
    <property type="term" value="F:DNA-binding transcription factor activity, RNA polymerase II-specific"/>
    <property type="evidence" value="ECO:0000247"/>
    <property type="project" value="NTNU_SB"/>
</dbReference>
<dbReference type="GO" id="GO:0001227">
    <property type="term" value="F:DNA-binding transcription repressor activity, RNA polymerase II-specific"/>
    <property type="evidence" value="ECO:0000314"/>
    <property type="project" value="NTNU_SB"/>
</dbReference>
<dbReference type="GO" id="GO:0046983">
    <property type="term" value="F:protein dimerization activity"/>
    <property type="evidence" value="ECO:0007669"/>
    <property type="project" value="InterPro"/>
</dbReference>
<dbReference type="GO" id="GO:0000978">
    <property type="term" value="F:RNA polymerase II cis-regulatory region sequence-specific DNA binding"/>
    <property type="evidence" value="ECO:0000314"/>
    <property type="project" value="NTNU_SB"/>
</dbReference>
<dbReference type="GO" id="GO:1990837">
    <property type="term" value="F:sequence-specific double-stranded DNA binding"/>
    <property type="evidence" value="ECO:0000314"/>
    <property type="project" value="ARUK-UCL"/>
</dbReference>
<dbReference type="GO" id="GO:0030154">
    <property type="term" value="P:cell differentiation"/>
    <property type="evidence" value="ECO:0007669"/>
    <property type="project" value="UniProtKB-KW"/>
</dbReference>
<dbReference type="GO" id="GO:0000122">
    <property type="term" value="P:negative regulation of transcription by RNA polymerase II"/>
    <property type="evidence" value="ECO:0000314"/>
    <property type="project" value="NTNU_SB"/>
</dbReference>
<dbReference type="GO" id="GO:0045595">
    <property type="term" value="P:regulation of cell differentiation"/>
    <property type="evidence" value="ECO:0000270"/>
    <property type="project" value="UniProtKB"/>
</dbReference>
<dbReference type="GO" id="GO:0042127">
    <property type="term" value="P:regulation of cell population proliferation"/>
    <property type="evidence" value="ECO:0000270"/>
    <property type="project" value="UniProtKB"/>
</dbReference>
<dbReference type="GO" id="GO:0006355">
    <property type="term" value="P:regulation of DNA-templated transcription"/>
    <property type="evidence" value="ECO:0000314"/>
    <property type="project" value="UniProtKB"/>
</dbReference>
<dbReference type="GO" id="GO:0007283">
    <property type="term" value="P:spermatogenesis"/>
    <property type="evidence" value="ECO:0000270"/>
    <property type="project" value="UniProtKB"/>
</dbReference>
<dbReference type="GO" id="GO:0006366">
    <property type="term" value="P:transcription by RNA polymerase II"/>
    <property type="evidence" value="ECO:0000304"/>
    <property type="project" value="ProtInc"/>
</dbReference>
<dbReference type="CDD" id="cd18909">
    <property type="entry name" value="bHLH_TCFL5"/>
    <property type="match status" value="1"/>
</dbReference>
<dbReference type="FunFam" id="4.10.280.10:FF:000057">
    <property type="entry name" value="transcription factor-like 5 protein-like"/>
    <property type="match status" value="1"/>
</dbReference>
<dbReference type="Gene3D" id="4.10.280.10">
    <property type="entry name" value="Helix-loop-helix DNA-binding domain"/>
    <property type="match status" value="1"/>
</dbReference>
<dbReference type="InterPro" id="IPR011598">
    <property type="entry name" value="bHLH_dom"/>
</dbReference>
<dbReference type="InterPro" id="IPR036638">
    <property type="entry name" value="HLH_DNA-bd_sf"/>
</dbReference>
<dbReference type="InterPro" id="IPR039583">
    <property type="entry name" value="TCFL5/SOLH1/2"/>
</dbReference>
<dbReference type="PANTHER" id="PTHR15402">
    <property type="entry name" value="TRANSCRIPTION FACTOR-LIKE 5 PROTEIN"/>
    <property type="match status" value="1"/>
</dbReference>
<dbReference type="PANTHER" id="PTHR15402:SF3">
    <property type="entry name" value="TRANSCRIPTION FACTOR-LIKE 5 PROTEIN"/>
    <property type="match status" value="1"/>
</dbReference>
<dbReference type="Pfam" id="PF00010">
    <property type="entry name" value="HLH"/>
    <property type="match status" value="1"/>
</dbReference>
<dbReference type="SMART" id="SM00353">
    <property type="entry name" value="HLH"/>
    <property type="match status" value="1"/>
</dbReference>
<dbReference type="SUPFAM" id="SSF47459">
    <property type="entry name" value="HLH, helix-loop-helix DNA-binding domain"/>
    <property type="match status" value="1"/>
</dbReference>
<dbReference type="PROSITE" id="PS50888">
    <property type="entry name" value="BHLH"/>
    <property type="match status" value="1"/>
</dbReference>
<protein>
    <recommendedName>
        <fullName>Transcription factor-like 5 protein</fullName>
    </recommendedName>
    <alternativeName>
        <fullName>Cha transcription factor</fullName>
    </alternativeName>
    <alternativeName>
        <fullName>HPV-16 E2-binding protein 1</fullName>
        <shortName>E2BP-1</shortName>
    </alternativeName>
</protein>
<name>TCFL5_HUMAN</name>